<dbReference type="EMBL" id="AE005174">
    <property type="protein sequence ID" value="AAG56276.1"/>
    <property type="molecule type" value="Genomic_DNA"/>
</dbReference>
<dbReference type="EMBL" id="BA000007">
    <property type="protein sequence ID" value="BAB35520.1"/>
    <property type="molecule type" value="Genomic_DNA"/>
</dbReference>
<dbReference type="PIR" id="A90891">
    <property type="entry name" value="A90891"/>
</dbReference>
<dbReference type="PIR" id="H85726">
    <property type="entry name" value="H85726"/>
</dbReference>
<dbReference type="RefSeq" id="NP_310124.1">
    <property type="nucleotide sequence ID" value="NC_002695.1"/>
</dbReference>
<dbReference type="RefSeq" id="WP_000224402.1">
    <property type="nucleotide sequence ID" value="NZ_VOAI01000034.1"/>
</dbReference>
<dbReference type="SMR" id="P58229"/>
<dbReference type="STRING" id="155864.Z2216"/>
<dbReference type="GeneID" id="917297"/>
<dbReference type="KEGG" id="ece:Z2216"/>
<dbReference type="KEGG" id="ecs:ECs_2097"/>
<dbReference type="PATRIC" id="fig|386585.9.peg.2202"/>
<dbReference type="eggNOG" id="COG0531">
    <property type="taxonomic scope" value="Bacteria"/>
</dbReference>
<dbReference type="HOGENOM" id="CLU_020854_4_0_6"/>
<dbReference type="OMA" id="GPSRGMF"/>
<dbReference type="Proteomes" id="UP000000558">
    <property type="component" value="Chromosome"/>
</dbReference>
<dbReference type="Proteomes" id="UP000002519">
    <property type="component" value="Chromosome"/>
</dbReference>
<dbReference type="GO" id="GO:0005886">
    <property type="term" value="C:plasma membrane"/>
    <property type="evidence" value="ECO:0007669"/>
    <property type="project" value="UniProtKB-SubCell"/>
</dbReference>
<dbReference type="GO" id="GO:0015297">
    <property type="term" value="F:antiporter activity"/>
    <property type="evidence" value="ECO:0007669"/>
    <property type="project" value="UniProtKB-KW"/>
</dbReference>
<dbReference type="GO" id="GO:0006865">
    <property type="term" value="P:amino acid transport"/>
    <property type="evidence" value="ECO:0007669"/>
    <property type="project" value="UniProtKB-KW"/>
</dbReference>
<dbReference type="FunFam" id="1.20.1740.10:FF:000031">
    <property type="entry name" value="Glutamate:gamma-aminobutyric acid antiporter"/>
    <property type="match status" value="1"/>
</dbReference>
<dbReference type="Gene3D" id="1.20.1740.10">
    <property type="entry name" value="Amino acid/polyamine transporter I"/>
    <property type="match status" value="1"/>
</dbReference>
<dbReference type="InterPro" id="IPR002293">
    <property type="entry name" value="AA/rel_permease1"/>
</dbReference>
<dbReference type="InterPro" id="IPR050367">
    <property type="entry name" value="APC_superfamily"/>
</dbReference>
<dbReference type="InterPro" id="IPR004759">
    <property type="entry name" value="Glu_antiport"/>
</dbReference>
<dbReference type="NCBIfam" id="TIGR00910">
    <property type="entry name" value="2A0307_GadC"/>
    <property type="match status" value="1"/>
</dbReference>
<dbReference type="PANTHER" id="PTHR42770">
    <property type="entry name" value="AMINO ACID TRANSPORTER-RELATED"/>
    <property type="match status" value="1"/>
</dbReference>
<dbReference type="PANTHER" id="PTHR42770:SF15">
    <property type="entry name" value="GLUTAMATE_GAMMA-AMINOBUTYRATE ANTIPORTER-RELATED"/>
    <property type="match status" value="1"/>
</dbReference>
<dbReference type="Pfam" id="PF13520">
    <property type="entry name" value="AA_permease_2"/>
    <property type="match status" value="1"/>
</dbReference>
<dbReference type="PIRSF" id="PIRSF006060">
    <property type="entry name" value="AA_transporter"/>
    <property type="match status" value="1"/>
</dbReference>
<sequence length="511" mass="55103">MATLVQTGKAKQLTLLGFFAITASMVMAVYEYPTFATSGFSLVFFLLLGGILWFIPVGLCAAEMATVDGWEEGGVFAWVSNTLGPRWGFAAISFGYLQIAIGFIPMLYFVLGALSYILKWPALNEDPITKTIAALIILWALALTQFGGTKYTARIAKVGFFAGILLPAFILIALAAIYLHSGAPVAIEMDSKTFFPDFSKVGTLVVFVAFILSYMGVEASATHVNEMSNPGRDYPLAMLLLMVAAICLSSVGGLSIAMVIPGNEINLSAGVMQTFTVLMSHVAPEIEWTVRVISALLLLGVLAEIASWIVGPSRGMYVTAQKNLLPAAFAKMNKNGVPVTLVISQLVITSIALIILTNTGGGNNMSFLIALALTVVIYLCAYFMLFIGYIVLVLKHPDLKRTFNIPGGKGVKLVVAIVGLLTSIMAFIVSFLPPDNIQGDSTDMYVELLVVSFLVVLALPFILYAVHDRKGKANTGVTLEPINSQNAPKGHFFLHPRARSPHYIVMNDKKH</sequence>
<evidence type="ECO:0000250" key="1">
    <source>
        <dbReference type="UniProtKB" id="P63235"/>
    </source>
</evidence>
<evidence type="ECO:0000255" key="2"/>
<evidence type="ECO:0000269" key="3">
    <source>
    </source>
</evidence>
<evidence type="ECO:0000305" key="4"/>
<gene>
    <name type="primary">gadC</name>
    <name type="synonym">acsA</name>
    <name type="synonym">xasA</name>
    <name type="ordered locus">Z2216</name>
    <name type="ordered locus">ECs2097</name>
</gene>
<organism>
    <name type="scientific">Escherichia coli O157:H7</name>
    <dbReference type="NCBI Taxonomy" id="83334"/>
    <lineage>
        <taxon>Bacteria</taxon>
        <taxon>Pseudomonadati</taxon>
        <taxon>Pseudomonadota</taxon>
        <taxon>Gammaproteobacteria</taxon>
        <taxon>Enterobacterales</taxon>
        <taxon>Enterobacteriaceae</taxon>
        <taxon>Escherichia</taxon>
    </lineage>
</organism>
<comment type="function">
    <text evidence="1">Involved in glutaminase-dependent acid resistance. Exchanges extracellular glutamate (Glu) for intracellular gamma-aminobutyric acid (GABA) under acidic conditions. The ability to survive the extremely acidic conditions of the stomach is essential for successful colonization of the host by commensal and pathogenic bacteria.</text>
</comment>
<comment type="catalytic activity">
    <reaction evidence="1">
        <text>4-aminobutanoate(in) + L-glutamate(out) = 4-aminobutanoate(out) + L-glutamate(in)</text>
        <dbReference type="Rhea" id="RHEA:28919"/>
        <dbReference type="ChEBI" id="CHEBI:29985"/>
        <dbReference type="ChEBI" id="CHEBI:59888"/>
    </reaction>
</comment>
<comment type="activity regulation">
    <text evidence="1 3">Shows pH-dependent activity (By similarity). The glutamate analog L-trans-pyrrolidine-2,4-dicarboxylic acid (L-PDC) blocks the uptake of glutamate by selective inhibition (PubMed:12855178).</text>
</comment>
<comment type="subcellular location">
    <subcellularLocation>
        <location evidence="1">Cell inner membrane</location>
        <topology evidence="1">Multi-pass membrane protein</topology>
    </subcellularLocation>
</comment>
<comment type="similarity">
    <text evidence="4">Belongs to the amino acid-polyamine-organocation (APC) superfamily. Glutamate:GABA antiporter (GGA) (TC 2.A.3.7) family.</text>
</comment>
<name>GADC_ECO57</name>
<protein>
    <recommendedName>
        <fullName evidence="1">Glutamate/gamma-aminobutyrate antiporter</fullName>
        <shortName evidence="1">Glu/GABA antiporter</shortName>
    </recommendedName>
</protein>
<reference key="1">
    <citation type="journal article" date="2001" name="Nature">
        <title>Genome sequence of enterohaemorrhagic Escherichia coli O157:H7.</title>
        <authorList>
            <person name="Perna N.T."/>
            <person name="Plunkett G. III"/>
            <person name="Burland V."/>
            <person name="Mau B."/>
            <person name="Glasner J.D."/>
            <person name="Rose D.J."/>
            <person name="Mayhew G.F."/>
            <person name="Evans P.S."/>
            <person name="Gregor J."/>
            <person name="Kirkpatrick H.A."/>
            <person name="Posfai G."/>
            <person name="Hackett J."/>
            <person name="Klink S."/>
            <person name="Boutin A."/>
            <person name="Shao Y."/>
            <person name="Miller L."/>
            <person name="Grotbeck E.J."/>
            <person name="Davis N.W."/>
            <person name="Lim A."/>
            <person name="Dimalanta E.T."/>
            <person name="Potamousis K."/>
            <person name="Apodaca J."/>
            <person name="Anantharaman T.S."/>
            <person name="Lin J."/>
            <person name="Yen G."/>
            <person name="Schwartz D.C."/>
            <person name="Welch R.A."/>
            <person name="Blattner F.R."/>
        </authorList>
    </citation>
    <scope>NUCLEOTIDE SEQUENCE [LARGE SCALE GENOMIC DNA]</scope>
    <source>
        <strain>O157:H7 / EDL933 / ATCC 700927 / EHEC</strain>
    </source>
</reference>
<reference key="2">
    <citation type="journal article" date="2001" name="DNA Res.">
        <title>Complete genome sequence of enterohemorrhagic Escherichia coli O157:H7 and genomic comparison with a laboratory strain K-12.</title>
        <authorList>
            <person name="Hayashi T."/>
            <person name="Makino K."/>
            <person name="Ohnishi M."/>
            <person name="Kurokawa K."/>
            <person name="Ishii K."/>
            <person name="Yokoyama K."/>
            <person name="Han C.-G."/>
            <person name="Ohtsubo E."/>
            <person name="Nakayama K."/>
            <person name="Murata T."/>
            <person name="Tanaka M."/>
            <person name="Tobe T."/>
            <person name="Iida T."/>
            <person name="Takami H."/>
            <person name="Honda T."/>
            <person name="Sasakawa C."/>
            <person name="Ogasawara N."/>
            <person name="Yasunaga T."/>
            <person name="Kuhara S."/>
            <person name="Shiba T."/>
            <person name="Hattori M."/>
            <person name="Shinagawa H."/>
        </authorList>
    </citation>
    <scope>NUCLEOTIDE SEQUENCE [LARGE SCALE GENOMIC DNA]</scope>
    <source>
        <strain>O157:H7 / Sakai / RIMD 0509952 / EHEC</strain>
    </source>
</reference>
<reference key="3">
    <citation type="journal article" date="2003" name="FEMS Microbiol. Lett.">
        <title>The glutamate-dependent acid resistance system of Escherichia coli and Shigella flexneri is inhibited in vitro by L-trans-pyrrolidine-2,4-dicarboxylic acid.</title>
        <authorList>
            <person name="Waterman S.R."/>
            <person name="Small P.L.C."/>
        </authorList>
    </citation>
    <scope>ACTIVITY REGULATION</scope>
    <scope>INHIBITION BY L-PDC</scope>
</reference>
<accession>P58229</accession>
<proteinExistence type="inferred from homology"/>
<feature type="chain" id="PRO_0000213042" description="Glutamate/gamma-aminobutyrate antiporter">
    <location>
        <begin position="1"/>
        <end position="511"/>
    </location>
</feature>
<feature type="topological domain" description="Cytoplasmic" evidence="2">
    <location>
        <begin position="1"/>
        <end position="14"/>
    </location>
</feature>
<feature type="transmembrane region" description="Helical" evidence="2">
    <location>
        <begin position="15"/>
        <end position="35"/>
    </location>
</feature>
<feature type="topological domain" description="Periplasmic" evidence="2">
    <location>
        <begin position="36"/>
        <end position="41"/>
    </location>
</feature>
<feature type="transmembrane region" description="Helical" evidence="2">
    <location>
        <begin position="42"/>
        <end position="62"/>
    </location>
</feature>
<feature type="topological domain" description="Cytoplasmic" evidence="2">
    <location>
        <begin position="63"/>
        <end position="93"/>
    </location>
</feature>
<feature type="transmembrane region" description="Helical" evidence="2">
    <location>
        <begin position="94"/>
        <end position="114"/>
    </location>
</feature>
<feature type="topological domain" description="Periplasmic" evidence="2">
    <location>
        <begin position="115"/>
        <end position="127"/>
    </location>
</feature>
<feature type="transmembrane region" description="Helical" evidence="2">
    <location>
        <begin position="128"/>
        <end position="148"/>
    </location>
</feature>
<feature type="topological domain" description="Cytoplasmic" evidence="2">
    <location>
        <begin position="149"/>
        <end position="157"/>
    </location>
</feature>
<feature type="transmembrane region" description="Helical" evidence="2">
    <location>
        <begin position="158"/>
        <end position="178"/>
    </location>
</feature>
<feature type="topological domain" description="Periplasmic" evidence="2">
    <location>
        <begin position="179"/>
        <end position="200"/>
    </location>
</feature>
<feature type="transmembrane region" description="Helical" evidence="2">
    <location>
        <begin position="201"/>
        <end position="221"/>
    </location>
</feature>
<feature type="topological domain" description="Cytoplasmic" evidence="2">
    <location>
        <begin position="222"/>
        <end position="239"/>
    </location>
</feature>
<feature type="transmembrane region" description="Helical" evidence="2">
    <location>
        <begin position="240"/>
        <end position="260"/>
    </location>
</feature>
<feature type="topological domain" description="Periplasmic" evidence="2">
    <location>
        <begin position="261"/>
        <end position="291"/>
    </location>
</feature>
<feature type="transmembrane region" description="Helical" evidence="2">
    <location>
        <begin position="292"/>
        <end position="312"/>
    </location>
</feature>
<feature type="topological domain" description="Cytoplasmic" evidence="2">
    <location>
        <begin position="313"/>
        <end position="335"/>
    </location>
</feature>
<feature type="transmembrane region" description="Helical" evidence="2">
    <location>
        <begin position="336"/>
        <end position="356"/>
    </location>
</feature>
<feature type="topological domain" description="Periplasmic" evidence="2">
    <location>
        <begin position="357"/>
        <end position="366"/>
    </location>
</feature>
<feature type="transmembrane region" description="Helical" evidence="2">
    <location>
        <begin position="367"/>
        <end position="387"/>
    </location>
</feature>
<feature type="topological domain" description="Cytoplasmic" evidence="2">
    <location>
        <begin position="388"/>
        <end position="412"/>
    </location>
</feature>
<feature type="transmembrane region" description="Helical" evidence="2">
    <location>
        <begin position="413"/>
        <end position="433"/>
    </location>
</feature>
<feature type="topological domain" description="Periplasmic" evidence="2">
    <location>
        <begin position="434"/>
        <end position="445"/>
    </location>
</feature>
<feature type="transmembrane region" description="Helical" evidence="2">
    <location>
        <begin position="446"/>
        <end position="466"/>
    </location>
</feature>
<feature type="topological domain" description="Cytoplasmic" evidence="2">
    <location>
        <begin position="467"/>
        <end position="511"/>
    </location>
</feature>
<keyword id="KW-0029">Amino-acid transport</keyword>
<keyword id="KW-0050">Antiport</keyword>
<keyword id="KW-0997">Cell inner membrane</keyword>
<keyword id="KW-1003">Cell membrane</keyword>
<keyword id="KW-0472">Membrane</keyword>
<keyword id="KW-1185">Reference proteome</keyword>
<keyword id="KW-0812">Transmembrane</keyword>
<keyword id="KW-1133">Transmembrane helix</keyword>
<keyword id="KW-0813">Transport</keyword>
<keyword id="KW-0843">Virulence</keyword>